<sequence length="247" mass="25070">MNGADLRIGIAGITGRMGKLLAEAVPLAGATLAGGIGRDGDLAALARESDVVIDFTVAATVSRHAGILAAAGTPWVLGTTGFDPAAEADIADAAARIPVFQAANFAPGVNLVIALAERLGATLAAETHDAEILEMHHRQKIDAPSGTALAIGAAVARGRGVDLAAVKDSGRDGHTGKRETGAIGFAALRGGQIVGSHSAIFTSAVEQITLTHHALDRRIFAEGAVRAALWLAGRAPGRYGMRDLLGL</sequence>
<feature type="chain" id="PRO_1000008529" description="4-hydroxy-tetrahydrodipicolinate reductase">
    <location>
        <begin position="1"/>
        <end position="247"/>
    </location>
</feature>
<feature type="active site" description="Proton donor/acceptor" evidence="1">
    <location>
        <position position="136"/>
    </location>
</feature>
<feature type="active site" description="Proton donor" evidence="1">
    <location>
        <position position="140"/>
    </location>
</feature>
<feature type="binding site" evidence="1">
    <location>
        <begin position="12"/>
        <end position="17"/>
    </location>
    <ligand>
        <name>NAD(+)</name>
        <dbReference type="ChEBI" id="CHEBI:57540"/>
    </ligand>
</feature>
<feature type="binding site" evidence="1">
    <location>
        <begin position="78"/>
        <end position="80"/>
    </location>
    <ligand>
        <name>NAD(+)</name>
        <dbReference type="ChEBI" id="CHEBI:57540"/>
    </ligand>
</feature>
<feature type="binding site" evidence="1">
    <location>
        <begin position="102"/>
        <end position="105"/>
    </location>
    <ligand>
        <name>NAD(+)</name>
        <dbReference type="ChEBI" id="CHEBI:57540"/>
    </ligand>
</feature>
<feature type="binding site" evidence="1">
    <location>
        <position position="137"/>
    </location>
    <ligand>
        <name>(S)-2,3,4,5-tetrahydrodipicolinate</name>
        <dbReference type="ChEBI" id="CHEBI:16845"/>
    </ligand>
</feature>
<feature type="binding site" evidence="1">
    <location>
        <begin position="146"/>
        <end position="147"/>
    </location>
    <ligand>
        <name>(S)-2,3,4,5-tetrahydrodipicolinate</name>
        <dbReference type="ChEBI" id="CHEBI:16845"/>
    </ligand>
</feature>
<dbReference type="EC" id="1.17.1.8" evidence="1"/>
<dbReference type="EMBL" id="CP000697">
    <property type="protein sequence ID" value="ABQ30271.1"/>
    <property type="molecule type" value="Genomic_DNA"/>
</dbReference>
<dbReference type="RefSeq" id="WP_011941957.1">
    <property type="nucleotide sequence ID" value="NC_009484.1"/>
</dbReference>
<dbReference type="SMR" id="A5FXD9"/>
<dbReference type="STRING" id="349163.Acry_1055"/>
<dbReference type="KEGG" id="acr:Acry_1055"/>
<dbReference type="eggNOG" id="COG0289">
    <property type="taxonomic scope" value="Bacteria"/>
</dbReference>
<dbReference type="HOGENOM" id="CLU_047479_2_2_5"/>
<dbReference type="UniPathway" id="UPA00034">
    <property type="reaction ID" value="UER00018"/>
</dbReference>
<dbReference type="Proteomes" id="UP000000245">
    <property type="component" value="Chromosome"/>
</dbReference>
<dbReference type="GO" id="GO:0005829">
    <property type="term" value="C:cytosol"/>
    <property type="evidence" value="ECO:0007669"/>
    <property type="project" value="TreeGrafter"/>
</dbReference>
<dbReference type="GO" id="GO:0008839">
    <property type="term" value="F:4-hydroxy-tetrahydrodipicolinate reductase"/>
    <property type="evidence" value="ECO:0007669"/>
    <property type="project" value="UniProtKB-EC"/>
</dbReference>
<dbReference type="GO" id="GO:0051287">
    <property type="term" value="F:NAD binding"/>
    <property type="evidence" value="ECO:0007669"/>
    <property type="project" value="UniProtKB-UniRule"/>
</dbReference>
<dbReference type="GO" id="GO:0050661">
    <property type="term" value="F:NADP binding"/>
    <property type="evidence" value="ECO:0007669"/>
    <property type="project" value="UniProtKB-UniRule"/>
</dbReference>
<dbReference type="GO" id="GO:0016726">
    <property type="term" value="F:oxidoreductase activity, acting on CH or CH2 groups, NAD or NADP as acceptor"/>
    <property type="evidence" value="ECO:0007669"/>
    <property type="project" value="UniProtKB-UniRule"/>
</dbReference>
<dbReference type="GO" id="GO:0019877">
    <property type="term" value="P:diaminopimelate biosynthetic process"/>
    <property type="evidence" value="ECO:0007669"/>
    <property type="project" value="UniProtKB-UniRule"/>
</dbReference>
<dbReference type="GO" id="GO:0009089">
    <property type="term" value="P:lysine biosynthetic process via diaminopimelate"/>
    <property type="evidence" value="ECO:0007669"/>
    <property type="project" value="UniProtKB-UniRule"/>
</dbReference>
<dbReference type="CDD" id="cd02274">
    <property type="entry name" value="DHDPR_N"/>
    <property type="match status" value="1"/>
</dbReference>
<dbReference type="Gene3D" id="3.30.360.10">
    <property type="entry name" value="Dihydrodipicolinate Reductase, domain 2"/>
    <property type="match status" value="1"/>
</dbReference>
<dbReference type="Gene3D" id="3.40.50.720">
    <property type="entry name" value="NAD(P)-binding Rossmann-like Domain"/>
    <property type="match status" value="1"/>
</dbReference>
<dbReference type="HAMAP" id="MF_00102">
    <property type="entry name" value="DapB"/>
    <property type="match status" value="1"/>
</dbReference>
<dbReference type="InterPro" id="IPR022663">
    <property type="entry name" value="DapB_C"/>
</dbReference>
<dbReference type="InterPro" id="IPR000846">
    <property type="entry name" value="DapB_N"/>
</dbReference>
<dbReference type="InterPro" id="IPR022664">
    <property type="entry name" value="DapB_N_CS"/>
</dbReference>
<dbReference type="InterPro" id="IPR023940">
    <property type="entry name" value="DHDPR_bac"/>
</dbReference>
<dbReference type="InterPro" id="IPR036291">
    <property type="entry name" value="NAD(P)-bd_dom_sf"/>
</dbReference>
<dbReference type="NCBIfam" id="TIGR00036">
    <property type="entry name" value="dapB"/>
    <property type="match status" value="1"/>
</dbReference>
<dbReference type="PANTHER" id="PTHR20836:SF0">
    <property type="entry name" value="4-HYDROXY-TETRAHYDRODIPICOLINATE REDUCTASE 1, CHLOROPLASTIC-RELATED"/>
    <property type="match status" value="1"/>
</dbReference>
<dbReference type="PANTHER" id="PTHR20836">
    <property type="entry name" value="DIHYDRODIPICOLINATE REDUCTASE"/>
    <property type="match status" value="1"/>
</dbReference>
<dbReference type="Pfam" id="PF05173">
    <property type="entry name" value="DapB_C"/>
    <property type="match status" value="1"/>
</dbReference>
<dbReference type="Pfam" id="PF01113">
    <property type="entry name" value="DapB_N"/>
    <property type="match status" value="1"/>
</dbReference>
<dbReference type="PIRSF" id="PIRSF000161">
    <property type="entry name" value="DHPR"/>
    <property type="match status" value="1"/>
</dbReference>
<dbReference type="SUPFAM" id="SSF55347">
    <property type="entry name" value="Glyceraldehyde-3-phosphate dehydrogenase-like, C-terminal domain"/>
    <property type="match status" value="1"/>
</dbReference>
<dbReference type="SUPFAM" id="SSF51735">
    <property type="entry name" value="NAD(P)-binding Rossmann-fold domains"/>
    <property type="match status" value="1"/>
</dbReference>
<dbReference type="PROSITE" id="PS01298">
    <property type="entry name" value="DAPB"/>
    <property type="match status" value="1"/>
</dbReference>
<comment type="function">
    <text evidence="1">Catalyzes the conversion of 4-hydroxy-tetrahydrodipicolinate (HTPA) to tetrahydrodipicolinate.</text>
</comment>
<comment type="catalytic activity">
    <reaction evidence="1">
        <text>(S)-2,3,4,5-tetrahydrodipicolinate + NAD(+) + H2O = (2S,4S)-4-hydroxy-2,3,4,5-tetrahydrodipicolinate + NADH + H(+)</text>
        <dbReference type="Rhea" id="RHEA:35323"/>
        <dbReference type="ChEBI" id="CHEBI:15377"/>
        <dbReference type="ChEBI" id="CHEBI:15378"/>
        <dbReference type="ChEBI" id="CHEBI:16845"/>
        <dbReference type="ChEBI" id="CHEBI:57540"/>
        <dbReference type="ChEBI" id="CHEBI:57945"/>
        <dbReference type="ChEBI" id="CHEBI:67139"/>
        <dbReference type="EC" id="1.17.1.8"/>
    </reaction>
</comment>
<comment type="catalytic activity">
    <reaction evidence="1">
        <text>(S)-2,3,4,5-tetrahydrodipicolinate + NADP(+) + H2O = (2S,4S)-4-hydroxy-2,3,4,5-tetrahydrodipicolinate + NADPH + H(+)</text>
        <dbReference type="Rhea" id="RHEA:35331"/>
        <dbReference type="ChEBI" id="CHEBI:15377"/>
        <dbReference type="ChEBI" id="CHEBI:15378"/>
        <dbReference type="ChEBI" id="CHEBI:16845"/>
        <dbReference type="ChEBI" id="CHEBI:57783"/>
        <dbReference type="ChEBI" id="CHEBI:58349"/>
        <dbReference type="ChEBI" id="CHEBI:67139"/>
        <dbReference type="EC" id="1.17.1.8"/>
    </reaction>
</comment>
<comment type="pathway">
    <text evidence="1">Amino-acid biosynthesis; L-lysine biosynthesis via DAP pathway; (S)-tetrahydrodipicolinate from L-aspartate: step 4/4.</text>
</comment>
<comment type="subcellular location">
    <subcellularLocation>
        <location evidence="1">Cytoplasm</location>
    </subcellularLocation>
</comment>
<comment type="similarity">
    <text evidence="1">Belongs to the DapB family.</text>
</comment>
<comment type="caution">
    <text evidence="2">Was originally thought to be a dihydrodipicolinate reductase (DHDPR), catalyzing the conversion of dihydrodipicolinate to tetrahydrodipicolinate. However, it was shown in E.coli that the substrate of the enzymatic reaction is not dihydrodipicolinate (DHDP) but in fact (2S,4S)-4-hydroxy-2,3,4,5-tetrahydrodipicolinic acid (HTPA), the product released by the DapA-catalyzed reaction.</text>
</comment>
<reference key="1">
    <citation type="submission" date="2007-05" db="EMBL/GenBank/DDBJ databases">
        <title>Complete sequence of chromosome of Acidiphilium cryptum JF-5.</title>
        <authorList>
            <consortium name="US DOE Joint Genome Institute"/>
            <person name="Copeland A."/>
            <person name="Lucas S."/>
            <person name="Lapidus A."/>
            <person name="Barry K."/>
            <person name="Detter J.C."/>
            <person name="Glavina del Rio T."/>
            <person name="Hammon N."/>
            <person name="Israni S."/>
            <person name="Dalin E."/>
            <person name="Tice H."/>
            <person name="Pitluck S."/>
            <person name="Sims D."/>
            <person name="Brettin T."/>
            <person name="Bruce D."/>
            <person name="Han C."/>
            <person name="Schmutz J."/>
            <person name="Larimer F."/>
            <person name="Land M."/>
            <person name="Hauser L."/>
            <person name="Kyrpides N."/>
            <person name="Kim E."/>
            <person name="Magnuson T."/>
            <person name="Richardson P."/>
        </authorList>
    </citation>
    <scope>NUCLEOTIDE SEQUENCE [LARGE SCALE GENOMIC DNA]</scope>
    <source>
        <strain>JF-5</strain>
    </source>
</reference>
<gene>
    <name evidence="1" type="primary">dapB</name>
    <name type="ordered locus">Acry_1055</name>
</gene>
<accession>A5FXD9</accession>
<protein>
    <recommendedName>
        <fullName evidence="1">4-hydroxy-tetrahydrodipicolinate reductase</fullName>
        <shortName evidence="1">HTPA reductase</shortName>
        <ecNumber evidence="1">1.17.1.8</ecNumber>
    </recommendedName>
</protein>
<organism>
    <name type="scientific">Acidiphilium cryptum (strain JF-5)</name>
    <dbReference type="NCBI Taxonomy" id="349163"/>
    <lineage>
        <taxon>Bacteria</taxon>
        <taxon>Pseudomonadati</taxon>
        <taxon>Pseudomonadota</taxon>
        <taxon>Alphaproteobacteria</taxon>
        <taxon>Acetobacterales</taxon>
        <taxon>Acidocellaceae</taxon>
        <taxon>Acidiphilium</taxon>
    </lineage>
</organism>
<evidence type="ECO:0000255" key="1">
    <source>
        <dbReference type="HAMAP-Rule" id="MF_00102"/>
    </source>
</evidence>
<evidence type="ECO:0000305" key="2"/>
<proteinExistence type="inferred from homology"/>
<keyword id="KW-0028">Amino-acid biosynthesis</keyword>
<keyword id="KW-0963">Cytoplasm</keyword>
<keyword id="KW-0220">Diaminopimelate biosynthesis</keyword>
<keyword id="KW-0457">Lysine biosynthesis</keyword>
<keyword id="KW-0520">NAD</keyword>
<keyword id="KW-0521">NADP</keyword>
<keyword id="KW-0560">Oxidoreductase</keyword>
<keyword id="KW-1185">Reference proteome</keyword>
<name>DAPB_ACICJ</name>